<keyword id="KW-0460">Magnesium</keyword>
<keyword id="KW-0479">Metal-binding</keyword>
<keyword id="KW-1185">Reference proteome</keyword>
<keyword id="KW-0784">Thiamine biosynthesis</keyword>
<keyword id="KW-0808">Transferase</keyword>
<protein>
    <recommendedName>
        <fullName evidence="1">Thiamine-phosphate synthase</fullName>
        <shortName evidence="1">TP synthase</shortName>
        <shortName evidence="1">TPS</shortName>
        <ecNumber evidence="1">2.5.1.3</ecNumber>
    </recommendedName>
    <alternativeName>
        <fullName evidence="1">Thiamine-phosphate pyrophosphorylase</fullName>
        <shortName evidence="1">TMP pyrophosphorylase</shortName>
        <shortName evidence="1">TMP-PPase</shortName>
    </alternativeName>
</protein>
<organism>
    <name type="scientific">Erythrobacter litoralis (strain HTCC2594)</name>
    <dbReference type="NCBI Taxonomy" id="314225"/>
    <lineage>
        <taxon>Bacteria</taxon>
        <taxon>Pseudomonadati</taxon>
        <taxon>Pseudomonadota</taxon>
        <taxon>Alphaproteobacteria</taxon>
        <taxon>Sphingomonadales</taxon>
        <taxon>Erythrobacteraceae</taxon>
        <taxon>Erythrobacter/Porphyrobacter group</taxon>
        <taxon>Erythrobacter</taxon>
    </lineage>
</organism>
<name>THIE_ERYLH</name>
<accession>Q2NB00</accession>
<comment type="function">
    <text evidence="1">Condenses 4-methyl-5-(beta-hydroxyethyl)thiazole monophosphate (THZ-P) and 2-methyl-4-amino-5-hydroxymethyl pyrimidine pyrophosphate (HMP-PP) to form thiamine monophosphate (TMP).</text>
</comment>
<comment type="catalytic activity">
    <reaction evidence="1">
        <text>2-[(2R,5Z)-2-carboxy-4-methylthiazol-5(2H)-ylidene]ethyl phosphate + 4-amino-2-methyl-5-(diphosphooxymethyl)pyrimidine + 2 H(+) = thiamine phosphate + CO2 + diphosphate</text>
        <dbReference type="Rhea" id="RHEA:47844"/>
        <dbReference type="ChEBI" id="CHEBI:15378"/>
        <dbReference type="ChEBI" id="CHEBI:16526"/>
        <dbReference type="ChEBI" id="CHEBI:33019"/>
        <dbReference type="ChEBI" id="CHEBI:37575"/>
        <dbReference type="ChEBI" id="CHEBI:57841"/>
        <dbReference type="ChEBI" id="CHEBI:62899"/>
        <dbReference type="EC" id="2.5.1.3"/>
    </reaction>
</comment>
<comment type="catalytic activity">
    <reaction evidence="1">
        <text>2-(2-carboxy-4-methylthiazol-5-yl)ethyl phosphate + 4-amino-2-methyl-5-(diphosphooxymethyl)pyrimidine + 2 H(+) = thiamine phosphate + CO2 + diphosphate</text>
        <dbReference type="Rhea" id="RHEA:47848"/>
        <dbReference type="ChEBI" id="CHEBI:15378"/>
        <dbReference type="ChEBI" id="CHEBI:16526"/>
        <dbReference type="ChEBI" id="CHEBI:33019"/>
        <dbReference type="ChEBI" id="CHEBI:37575"/>
        <dbReference type="ChEBI" id="CHEBI:57841"/>
        <dbReference type="ChEBI" id="CHEBI:62890"/>
        <dbReference type="EC" id="2.5.1.3"/>
    </reaction>
</comment>
<comment type="catalytic activity">
    <reaction evidence="1">
        <text>4-methyl-5-(2-phosphooxyethyl)-thiazole + 4-amino-2-methyl-5-(diphosphooxymethyl)pyrimidine + H(+) = thiamine phosphate + diphosphate</text>
        <dbReference type="Rhea" id="RHEA:22328"/>
        <dbReference type="ChEBI" id="CHEBI:15378"/>
        <dbReference type="ChEBI" id="CHEBI:33019"/>
        <dbReference type="ChEBI" id="CHEBI:37575"/>
        <dbReference type="ChEBI" id="CHEBI:57841"/>
        <dbReference type="ChEBI" id="CHEBI:58296"/>
        <dbReference type="EC" id="2.5.1.3"/>
    </reaction>
</comment>
<comment type="cofactor">
    <cofactor evidence="1">
        <name>Mg(2+)</name>
        <dbReference type="ChEBI" id="CHEBI:18420"/>
    </cofactor>
    <text evidence="1">Binds 1 Mg(2+) ion per subunit.</text>
</comment>
<comment type="pathway">
    <text evidence="1">Cofactor biosynthesis; thiamine diphosphate biosynthesis; thiamine phosphate from 4-amino-2-methyl-5-diphosphomethylpyrimidine and 4-methyl-5-(2-phosphoethyl)-thiazole: step 1/1.</text>
</comment>
<comment type="similarity">
    <text evidence="1">Belongs to the thiamine-phosphate synthase family.</text>
</comment>
<dbReference type="EC" id="2.5.1.3" evidence="1"/>
<dbReference type="EMBL" id="CP000157">
    <property type="protein sequence ID" value="ABC63141.1"/>
    <property type="molecule type" value="Genomic_DNA"/>
</dbReference>
<dbReference type="RefSeq" id="WP_011413977.1">
    <property type="nucleotide sequence ID" value="NC_007722.1"/>
</dbReference>
<dbReference type="SMR" id="Q2NB00"/>
<dbReference type="STRING" id="314225.ELI_05245"/>
<dbReference type="KEGG" id="eli:ELI_05245"/>
<dbReference type="eggNOG" id="COG0352">
    <property type="taxonomic scope" value="Bacteria"/>
</dbReference>
<dbReference type="HOGENOM" id="CLU_018272_3_1_5"/>
<dbReference type="OrthoDB" id="7159061at2"/>
<dbReference type="UniPathway" id="UPA00060">
    <property type="reaction ID" value="UER00141"/>
</dbReference>
<dbReference type="Proteomes" id="UP000008808">
    <property type="component" value="Chromosome"/>
</dbReference>
<dbReference type="GO" id="GO:0005737">
    <property type="term" value="C:cytoplasm"/>
    <property type="evidence" value="ECO:0007669"/>
    <property type="project" value="TreeGrafter"/>
</dbReference>
<dbReference type="GO" id="GO:0000287">
    <property type="term" value="F:magnesium ion binding"/>
    <property type="evidence" value="ECO:0007669"/>
    <property type="project" value="UniProtKB-UniRule"/>
</dbReference>
<dbReference type="GO" id="GO:0004789">
    <property type="term" value="F:thiamine-phosphate diphosphorylase activity"/>
    <property type="evidence" value="ECO:0007669"/>
    <property type="project" value="UniProtKB-UniRule"/>
</dbReference>
<dbReference type="GO" id="GO:0009228">
    <property type="term" value="P:thiamine biosynthetic process"/>
    <property type="evidence" value="ECO:0007669"/>
    <property type="project" value="UniProtKB-KW"/>
</dbReference>
<dbReference type="GO" id="GO:0009229">
    <property type="term" value="P:thiamine diphosphate biosynthetic process"/>
    <property type="evidence" value="ECO:0007669"/>
    <property type="project" value="UniProtKB-UniRule"/>
</dbReference>
<dbReference type="CDD" id="cd00564">
    <property type="entry name" value="TMP_TenI"/>
    <property type="match status" value="1"/>
</dbReference>
<dbReference type="Gene3D" id="3.20.20.70">
    <property type="entry name" value="Aldolase class I"/>
    <property type="match status" value="1"/>
</dbReference>
<dbReference type="HAMAP" id="MF_00097">
    <property type="entry name" value="TMP_synthase"/>
    <property type="match status" value="1"/>
</dbReference>
<dbReference type="InterPro" id="IPR013785">
    <property type="entry name" value="Aldolase_TIM"/>
</dbReference>
<dbReference type="InterPro" id="IPR036206">
    <property type="entry name" value="ThiamineP_synth_sf"/>
</dbReference>
<dbReference type="InterPro" id="IPR022998">
    <property type="entry name" value="ThiamineP_synth_TenI"/>
</dbReference>
<dbReference type="InterPro" id="IPR034291">
    <property type="entry name" value="TMP_synthase"/>
</dbReference>
<dbReference type="NCBIfam" id="TIGR00693">
    <property type="entry name" value="thiE"/>
    <property type="match status" value="1"/>
</dbReference>
<dbReference type="PANTHER" id="PTHR20857">
    <property type="entry name" value="THIAMINE-PHOSPHATE PYROPHOSPHORYLASE"/>
    <property type="match status" value="1"/>
</dbReference>
<dbReference type="PANTHER" id="PTHR20857:SF15">
    <property type="entry name" value="THIAMINE-PHOSPHATE SYNTHASE"/>
    <property type="match status" value="1"/>
</dbReference>
<dbReference type="Pfam" id="PF02581">
    <property type="entry name" value="TMP-TENI"/>
    <property type="match status" value="1"/>
</dbReference>
<dbReference type="SUPFAM" id="SSF51391">
    <property type="entry name" value="Thiamin phosphate synthase"/>
    <property type="match status" value="1"/>
</dbReference>
<reference key="1">
    <citation type="journal article" date="2009" name="J. Bacteriol.">
        <title>Complete genome sequence of Erythrobacter litoralis HTCC2594.</title>
        <authorList>
            <person name="Oh H.M."/>
            <person name="Giovannoni S.J."/>
            <person name="Ferriera S."/>
            <person name="Johnson J."/>
            <person name="Cho J.C."/>
        </authorList>
    </citation>
    <scope>NUCLEOTIDE SEQUENCE [LARGE SCALE GENOMIC DNA]</scope>
    <source>
        <strain>HTCC2594</strain>
    </source>
</reference>
<feature type="chain" id="PRO_0000336393" description="Thiamine-phosphate synthase">
    <location>
        <begin position="1"/>
        <end position="213"/>
    </location>
</feature>
<feature type="binding site" evidence="1">
    <location>
        <begin position="41"/>
        <end position="45"/>
    </location>
    <ligand>
        <name>4-amino-2-methyl-5-(diphosphooxymethyl)pyrimidine</name>
        <dbReference type="ChEBI" id="CHEBI:57841"/>
    </ligand>
</feature>
<feature type="binding site" evidence="1">
    <location>
        <position position="73"/>
    </location>
    <ligand>
        <name>4-amino-2-methyl-5-(diphosphooxymethyl)pyrimidine</name>
        <dbReference type="ChEBI" id="CHEBI:57841"/>
    </ligand>
</feature>
<feature type="binding site" evidence="1">
    <location>
        <position position="74"/>
    </location>
    <ligand>
        <name>Mg(2+)</name>
        <dbReference type="ChEBI" id="CHEBI:18420"/>
    </ligand>
</feature>
<feature type="binding site" evidence="1">
    <location>
        <position position="93"/>
    </location>
    <ligand>
        <name>Mg(2+)</name>
        <dbReference type="ChEBI" id="CHEBI:18420"/>
    </ligand>
</feature>
<feature type="binding site" evidence="1">
    <location>
        <position position="112"/>
    </location>
    <ligand>
        <name>4-amino-2-methyl-5-(diphosphooxymethyl)pyrimidine</name>
        <dbReference type="ChEBI" id="CHEBI:57841"/>
    </ligand>
</feature>
<feature type="binding site" evidence="1">
    <location>
        <begin position="139"/>
        <end position="141"/>
    </location>
    <ligand>
        <name>2-[(2R,5Z)-2-carboxy-4-methylthiazol-5(2H)-ylidene]ethyl phosphate</name>
        <dbReference type="ChEBI" id="CHEBI:62899"/>
    </ligand>
</feature>
<feature type="binding site" evidence="1">
    <location>
        <position position="142"/>
    </location>
    <ligand>
        <name>4-amino-2-methyl-5-(diphosphooxymethyl)pyrimidine</name>
        <dbReference type="ChEBI" id="CHEBI:57841"/>
    </ligand>
</feature>
<feature type="binding site" evidence="1">
    <location>
        <position position="171"/>
    </location>
    <ligand>
        <name>2-[(2R,5Z)-2-carboxy-4-methylthiazol-5(2H)-ylidene]ethyl phosphate</name>
        <dbReference type="ChEBI" id="CHEBI:62899"/>
    </ligand>
</feature>
<evidence type="ECO:0000255" key="1">
    <source>
        <dbReference type="HAMAP-Rule" id="MF_00097"/>
    </source>
</evidence>
<proteinExistence type="inferred from homology"/>
<sequence length="213" mass="22700">MAETEIPTQLYLISPLDVRGGFPQRLERALEAGRGVVTAFQFRVKGIDQHEAARLAEPLQAICAAHDVAFVVNDSIALAKRLKADGVHLGQDDGSPKEAREQLGREAQIGVTCHASRHLAMEAGEAGADYVAFGAFFDSATKDKGDAEQPTLELLEWWSQVFEIPCVAIGGITPDNCQPLIEAGADFLAVSGAVWSGDERAAVQAFAEQIAAA</sequence>
<gene>
    <name evidence="1" type="primary">thiE</name>
    <name type="ordered locus">ELI_05245</name>
</gene>